<protein>
    <recommendedName>
        <fullName evidence="1">Bifunctional uridylyltransferase/uridylyl-removing enzyme</fullName>
        <shortName evidence="1">UTase/UR</shortName>
    </recommendedName>
    <alternativeName>
        <fullName evidence="1">Bifunctional [protein-PII] modification enzyme</fullName>
    </alternativeName>
    <alternativeName>
        <fullName evidence="1">Bifunctional nitrogen sensor protein</fullName>
    </alternativeName>
    <domain>
        <recommendedName>
            <fullName evidence="1">[Protein-PII] uridylyltransferase</fullName>
            <shortName evidence="1">PII uridylyltransferase</shortName>
            <shortName evidence="1">UTase</shortName>
            <ecNumber evidence="1">2.7.7.59</ecNumber>
        </recommendedName>
    </domain>
    <domain>
        <recommendedName>
            <fullName evidence="1">[Protein-PII]-UMP uridylyl-removing enzyme</fullName>
            <shortName evidence="1">UR</shortName>
            <ecNumber evidence="1">3.1.4.-</ecNumber>
        </recommendedName>
    </domain>
</protein>
<reference key="1">
    <citation type="journal article" date="2010" name="PLoS ONE">
        <title>The complete genome sequence of Cupriavidus metallidurans strain CH34, a master survivalist in harsh and anthropogenic environments.</title>
        <authorList>
            <person name="Janssen P.J."/>
            <person name="Van Houdt R."/>
            <person name="Moors H."/>
            <person name="Monsieurs P."/>
            <person name="Morin N."/>
            <person name="Michaux A."/>
            <person name="Benotmane M.A."/>
            <person name="Leys N."/>
            <person name="Vallaeys T."/>
            <person name="Lapidus A."/>
            <person name="Monchy S."/>
            <person name="Medigue C."/>
            <person name="Taghavi S."/>
            <person name="McCorkle S."/>
            <person name="Dunn J."/>
            <person name="van der Lelie D."/>
            <person name="Mergeay M."/>
        </authorList>
    </citation>
    <scope>NUCLEOTIDE SEQUENCE [LARGE SCALE GENOMIC DNA]</scope>
    <source>
        <strain>ATCC 43123 / DSM 2839 / NBRC 102507 / CH34</strain>
    </source>
</reference>
<comment type="function">
    <text evidence="1">Modifies, by uridylylation and deuridylylation, the PII regulatory proteins (GlnB and homologs), in response to the nitrogen status of the cell that GlnD senses through the glutamine level. Under low glutamine levels, catalyzes the conversion of the PII proteins and UTP to PII-UMP and PPi, while under higher glutamine levels, GlnD hydrolyzes PII-UMP to PII and UMP (deuridylylation). Thus, controls uridylylation state and activity of the PII proteins, and plays an important role in the regulation of nitrogen assimilation and metabolism.</text>
</comment>
<comment type="catalytic activity">
    <reaction evidence="1">
        <text>[protein-PII]-L-tyrosine + UTP = [protein-PII]-uridylyl-L-tyrosine + diphosphate</text>
        <dbReference type="Rhea" id="RHEA:13673"/>
        <dbReference type="Rhea" id="RHEA-COMP:12147"/>
        <dbReference type="Rhea" id="RHEA-COMP:12148"/>
        <dbReference type="ChEBI" id="CHEBI:33019"/>
        <dbReference type="ChEBI" id="CHEBI:46398"/>
        <dbReference type="ChEBI" id="CHEBI:46858"/>
        <dbReference type="ChEBI" id="CHEBI:90602"/>
        <dbReference type="EC" id="2.7.7.59"/>
    </reaction>
</comment>
<comment type="catalytic activity">
    <reaction evidence="1">
        <text>[protein-PII]-uridylyl-L-tyrosine + H2O = [protein-PII]-L-tyrosine + UMP + H(+)</text>
        <dbReference type="Rhea" id="RHEA:48600"/>
        <dbReference type="Rhea" id="RHEA-COMP:12147"/>
        <dbReference type="Rhea" id="RHEA-COMP:12148"/>
        <dbReference type="ChEBI" id="CHEBI:15377"/>
        <dbReference type="ChEBI" id="CHEBI:15378"/>
        <dbReference type="ChEBI" id="CHEBI:46858"/>
        <dbReference type="ChEBI" id="CHEBI:57865"/>
        <dbReference type="ChEBI" id="CHEBI:90602"/>
    </reaction>
</comment>
<comment type="cofactor">
    <cofactor evidence="1">
        <name>Mg(2+)</name>
        <dbReference type="ChEBI" id="CHEBI:18420"/>
    </cofactor>
</comment>
<comment type="activity regulation">
    <text evidence="1">Uridylyltransferase (UTase) activity is inhibited by glutamine, while glutamine activates uridylyl-removing (UR) activity.</text>
</comment>
<comment type="domain">
    <text evidence="1">Has four distinct domains: an N-terminal nucleotidyltransferase (NT) domain responsible for UTase activity, a central HD domain that encodes UR activity, and two C-terminal ACT domains that seem to have a role in glutamine sensing.</text>
</comment>
<comment type="similarity">
    <text evidence="1">Belongs to the GlnD family.</text>
</comment>
<evidence type="ECO:0000255" key="1">
    <source>
        <dbReference type="HAMAP-Rule" id="MF_00277"/>
    </source>
</evidence>
<evidence type="ECO:0000255" key="2">
    <source>
        <dbReference type="PROSITE-ProRule" id="PRU01175"/>
    </source>
</evidence>
<name>GLND_CUPMC</name>
<organism>
    <name type="scientific">Cupriavidus metallidurans (strain ATCC 43123 / DSM 2839 / NBRC 102507 / CH34)</name>
    <name type="common">Ralstonia metallidurans</name>
    <dbReference type="NCBI Taxonomy" id="266264"/>
    <lineage>
        <taxon>Bacteria</taxon>
        <taxon>Pseudomonadati</taxon>
        <taxon>Pseudomonadota</taxon>
        <taxon>Betaproteobacteria</taxon>
        <taxon>Burkholderiales</taxon>
        <taxon>Burkholderiaceae</taxon>
        <taxon>Cupriavidus</taxon>
    </lineage>
</organism>
<feature type="chain" id="PRO_1000078810" description="Bifunctional uridylyltransferase/uridylyl-removing enzyme">
    <location>
        <begin position="1"/>
        <end position="857"/>
    </location>
</feature>
<feature type="domain" description="HD" evidence="2">
    <location>
        <begin position="441"/>
        <end position="563"/>
    </location>
</feature>
<feature type="domain" description="ACT 1" evidence="1">
    <location>
        <begin position="680"/>
        <end position="760"/>
    </location>
</feature>
<feature type="domain" description="ACT 2" evidence="1">
    <location>
        <begin position="788"/>
        <end position="857"/>
    </location>
</feature>
<feature type="region of interest" description="Uridylyltransferase">
    <location>
        <begin position="1"/>
        <end position="322"/>
    </location>
</feature>
<feature type="region of interest" description="Uridylyl-removing">
    <location>
        <begin position="323"/>
        <end position="679"/>
    </location>
</feature>
<proteinExistence type="inferred from homology"/>
<sequence length="857" mass="97774">MDTTPELLLCQRIRDKLKADKQVLFAEFDANNQVNPLVTKLRRAVDVALTEAWTGLELPGDVALVAVGGYGRGELFPHSDVDVLLLLPGEPDAKMAAKLERFIGLCWDLGLEIGSSVRTVDDCIRESAADITIRTSLLEARLLIGNKALFKSLQTRYQADMDAADFFQAKLLEMRQRHAKYQDTPYALEPNCKESPGGLRDLQVILWMTEAARLGDSWKQLFERGLLTEREAQELTRNERLLRTIRARLHLLAGRRQDVLVFDLQTALAEAFGYRQTTNKRASEQLMRRYYWAAKAVTQLNSVLLLNIEAMLFPSESMVTREINDRFVERQGMLEITSDDLYERNPHAILETFLLYERTPGVKGLSPRTLRGLYNARTVMDASWRNDPVNRRLFLAIVQEPQGITHALRLMNQTSVLGRYLINFRRIVGQMQHDLFHVYTVDQHILMVVRNMRRFAIVEHTHEFPFCSQLMAGFDRPWVLWVAALFHDIAKGRGGDHSKLGTVDARRFCKQHGISREDTDLIAWLVEHHLTMSHVAQKQDLTDPDVVKAFAQVVGNGRYLTALYLLTVADIRGTSPKVWNAWKGKLLEDLYRITLRVLGGARLDTHSLWAQKRDDTIAQLRLKAFDPELAKPLWDKLDMSFFMRQDARDIAWLTRSLFNKVNSPNPVVKARISPAGEGLQVAVYVKDQPDLFARICGYFERKAFSIQDAKIETTRDGYALDTFQITDPGLAGDYRDILTLVEHELGERVRLECPLPDPTQGRLSRQSRSFPIKPRVDLRPDERGQYYLLSVSANDRTGLLYAIARVLAKHRVSVHSARINTLGERVEDVFLVDGSRLAADNRLQIQLEQDLLDALAI</sequence>
<dbReference type="EC" id="2.7.7.59" evidence="1"/>
<dbReference type="EC" id="3.1.4.-" evidence="1"/>
<dbReference type="EMBL" id="CP000352">
    <property type="protein sequence ID" value="ABF08316.1"/>
    <property type="molecule type" value="Genomic_DNA"/>
</dbReference>
<dbReference type="RefSeq" id="WP_011516184.1">
    <property type="nucleotide sequence ID" value="NC_007973.1"/>
</dbReference>
<dbReference type="SMR" id="Q1LNG0"/>
<dbReference type="STRING" id="266264.Rmet_1433"/>
<dbReference type="KEGG" id="rme:Rmet_1433"/>
<dbReference type="eggNOG" id="COG2844">
    <property type="taxonomic scope" value="Bacteria"/>
</dbReference>
<dbReference type="HOGENOM" id="CLU_012833_0_0_4"/>
<dbReference type="Proteomes" id="UP000002429">
    <property type="component" value="Chromosome"/>
</dbReference>
<dbReference type="GO" id="GO:0008773">
    <property type="term" value="F:[protein-PII] uridylyltransferase activity"/>
    <property type="evidence" value="ECO:0007669"/>
    <property type="project" value="UniProtKB-UniRule"/>
</dbReference>
<dbReference type="GO" id="GO:0008081">
    <property type="term" value="F:phosphoric diester hydrolase activity"/>
    <property type="evidence" value="ECO:0007669"/>
    <property type="project" value="UniProtKB-UniRule"/>
</dbReference>
<dbReference type="GO" id="GO:0006808">
    <property type="term" value="P:regulation of nitrogen utilization"/>
    <property type="evidence" value="ECO:0007669"/>
    <property type="project" value="UniProtKB-UniRule"/>
</dbReference>
<dbReference type="CDD" id="cd04899">
    <property type="entry name" value="ACT_ACR-UUR-like_2"/>
    <property type="match status" value="1"/>
</dbReference>
<dbReference type="CDD" id="cd04900">
    <property type="entry name" value="ACT_UUR-like_1"/>
    <property type="match status" value="1"/>
</dbReference>
<dbReference type="CDD" id="cd00077">
    <property type="entry name" value="HDc"/>
    <property type="match status" value="1"/>
</dbReference>
<dbReference type="CDD" id="cd05401">
    <property type="entry name" value="NT_GlnE_GlnD_like"/>
    <property type="match status" value="1"/>
</dbReference>
<dbReference type="Gene3D" id="3.30.70.260">
    <property type="match status" value="1"/>
</dbReference>
<dbReference type="Gene3D" id="1.10.3210.10">
    <property type="entry name" value="Hypothetical protein af1432"/>
    <property type="match status" value="1"/>
</dbReference>
<dbReference type="Gene3D" id="1.20.120.330">
    <property type="entry name" value="Nucleotidyltransferases domain 2"/>
    <property type="match status" value="1"/>
</dbReference>
<dbReference type="HAMAP" id="MF_00277">
    <property type="entry name" value="PII_uridylyl_transf"/>
    <property type="match status" value="1"/>
</dbReference>
<dbReference type="InterPro" id="IPR045865">
    <property type="entry name" value="ACT-like_dom_sf"/>
</dbReference>
<dbReference type="InterPro" id="IPR002912">
    <property type="entry name" value="ACT_dom"/>
</dbReference>
<dbReference type="InterPro" id="IPR003607">
    <property type="entry name" value="HD/PDEase_dom"/>
</dbReference>
<dbReference type="InterPro" id="IPR006674">
    <property type="entry name" value="HD_domain"/>
</dbReference>
<dbReference type="InterPro" id="IPR043519">
    <property type="entry name" value="NT_sf"/>
</dbReference>
<dbReference type="InterPro" id="IPR013546">
    <property type="entry name" value="PII_UdlTrfase/GS_AdlTrfase"/>
</dbReference>
<dbReference type="InterPro" id="IPR002934">
    <property type="entry name" value="Polymerase_NTP_transf_dom"/>
</dbReference>
<dbReference type="InterPro" id="IPR010043">
    <property type="entry name" value="UTase/UR"/>
</dbReference>
<dbReference type="NCBIfam" id="NF002837">
    <property type="entry name" value="PRK03059.1"/>
    <property type="match status" value="1"/>
</dbReference>
<dbReference type="NCBIfam" id="TIGR01693">
    <property type="entry name" value="UTase_glnD"/>
    <property type="match status" value="1"/>
</dbReference>
<dbReference type="PANTHER" id="PTHR47320">
    <property type="entry name" value="BIFUNCTIONAL URIDYLYLTRANSFERASE/URIDYLYL-REMOVING ENZYME"/>
    <property type="match status" value="1"/>
</dbReference>
<dbReference type="PANTHER" id="PTHR47320:SF1">
    <property type="entry name" value="BIFUNCTIONAL URIDYLYLTRANSFERASE_URIDYLYL-REMOVING ENZYME"/>
    <property type="match status" value="1"/>
</dbReference>
<dbReference type="Pfam" id="PF01842">
    <property type="entry name" value="ACT"/>
    <property type="match status" value="1"/>
</dbReference>
<dbReference type="Pfam" id="PF08335">
    <property type="entry name" value="GlnD_UR_UTase"/>
    <property type="match status" value="1"/>
</dbReference>
<dbReference type="Pfam" id="PF01966">
    <property type="entry name" value="HD"/>
    <property type="match status" value="1"/>
</dbReference>
<dbReference type="Pfam" id="PF01909">
    <property type="entry name" value="NTP_transf_2"/>
    <property type="match status" value="1"/>
</dbReference>
<dbReference type="PIRSF" id="PIRSF006288">
    <property type="entry name" value="PII_uridyltransf"/>
    <property type="match status" value="1"/>
</dbReference>
<dbReference type="SMART" id="SM00471">
    <property type="entry name" value="HDc"/>
    <property type="match status" value="1"/>
</dbReference>
<dbReference type="SUPFAM" id="SSF55021">
    <property type="entry name" value="ACT-like"/>
    <property type="match status" value="2"/>
</dbReference>
<dbReference type="SUPFAM" id="SSF109604">
    <property type="entry name" value="HD-domain/PDEase-like"/>
    <property type="match status" value="1"/>
</dbReference>
<dbReference type="SUPFAM" id="SSF81301">
    <property type="entry name" value="Nucleotidyltransferase"/>
    <property type="match status" value="1"/>
</dbReference>
<dbReference type="SUPFAM" id="SSF81593">
    <property type="entry name" value="Nucleotidyltransferase substrate binding subunit/domain"/>
    <property type="match status" value="1"/>
</dbReference>
<dbReference type="PROSITE" id="PS51671">
    <property type="entry name" value="ACT"/>
    <property type="match status" value="2"/>
</dbReference>
<dbReference type="PROSITE" id="PS51831">
    <property type="entry name" value="HD"/>
    <property type="match status" value="1"/>
</dbReference>
<keyword id="KW-0378">Hydrolase</keyword>
<keyword id="KW-0460">Magnesium</keyword>
<keyword id="KW-0511">Multifunctional enzyme</keyword>
<keyword id="KW-0548">Nucleotidyltransferase</keyword>
<keyword id="KW-1185">Reference proteome</keyword>
<keyword id="KW-0677">Repeat</keyword>
<keyword id="KW-0808">Transferase</keyword>
<accession>Q1LNG0</accession>
<gene>
    <name evidence="1" type="primary">glnD</name>
    <name type="ordered locus">Rmet_1433</name>
</gene>